<reference key="1">
    <citation type="journal article" date="2009" name="BMC Genomics">
        <title>Genome evolution driven by host adaptations results in a more virulent and antimicrobial-resistant Streptococcus pneumoniae serotype 14.</title>
        <authorList>
            <person name="Ding F."/>
            <person name="Tang P."/>
            <person name="Hsu M.-H."/>
            <person name="Cui P."/>
            <person name="Hu S."/>
            <person name="Yu J."/>
            <person name="Chiu C.-H."/>
        </authorList>
    </citation>
    <scope>NUCLEOTIDE SEQUENCE [LARGE SCALE GENOMIC DNA]</scope>
    <source>
        <strain>CGSP14</strain>
    </source>
</reference>
<name>MURG_STRPS</name>
<sequence length="352" mass="39408">MKKIVFTGGGTVGHVTLNLLLMPKFIEDGWEVHYIGDKRGIEHQEILKSGLDVTFHSIATGKLRRYFSWQNMLDVFKVGWGIVQSLFIMLRLRPQTLFSKGGFVSVPPVIAARVSGVPVFIHESDLSMGLANKIAYKFATKMYSTFEQASSLSKVEHVGAVTKVSDQKNPEPDELVDIQTHFNPKLPTVLFVGGSAGARVFNQLVTDHKKELTERYNIINLTGDSSLNELSQNLFRVDYVTDLYQPLMELADIVVTRGGANTIFELLAIAKLHVIVPLGREASRGDQIENAAYFVKKGYAEDLQESDLTLDSLEEKLSHLLSHKEDYQAKMKASKELKSLADFYQLLKKDLS</sequence>
<proteinExistence type="inferred from homology"/>
<evidence type="ECO:0000255" key="1">
    <source>
        <dbReference type="HAMAP-Rule" id="MF_00033"/>
    </source>
</evidence>
<feature type="chain" id="PRO_1000090478" description="UDP-N-acetylglucosamine--N-acetylmuramyl-(pentapeptide) pyrophosphoryl-undecaprenol N-acetylglucosamine transferase">
    <location>
        <begin position="1"/>
        <end position="352"/>
    </location>
</feature>
<feature type="binding site" evidence="1">
    <location>
        <position position="195"/>
    </location>
    <ligand>
        <name>UDP-N-acetyl-alpha-D-glucosamine</name>
        <dbReference type="ChEBI" id="CHEBI:57705"/>
    </ligand>
</feature>
<feature type="binding site" evidence="1">
    <location>
        <position position="287"/>
    </location>
    <ligand>
        <name>UDP-N-acetyl-alpha-D-glucosamine</name>
        <dbReference type="ChEBI" id="CHEBI:57705"/>
    </ligand>
</feature>
<comment type="function">
    <text evidence="1">Cell wall formation. Catalyzes the transfer of a GlcNAc subunit on undecaprenyl-pyrophosphoryl-MurNAc-pentapeptide (lipid intermediate I) to form undecaprenyl-pyrophosphoryl-MurNAc-(pentapeptide)GlcNAc (lipid intermediate II).</text>
</comment>
<comment type="catalytic activity">
    <reaction evidence="1">
        <text>Mur2Ac(oyl-L-Ala-gamma-D-Glu-L-Lys-D-Ala-D-Ala)-di-trans,octa-cis-undecaprenyl diphosphate + UDP-N-acetyl-alpha-D-glucosamine = beta-D-GlcNAc-(1-&gt;4)-Mur2Ac(oyl-L-Ala-gamma-D-Glu-L-Lys-D-Ala-D-Ala)-di-trans,octa-cis-undecaprenyl diphosphate + UDP + H(+)</text>
        <dbReference type="Rhea" id="RHEA:23192"/>
        <dbReference type="ChEBI" id="CHEBI:15378"/>
        <dbReference type="ChEBI" id="CHEBI:57705"/>
        <dbReference type="ChEBI" id="CHEBI:58223"/>
        <dbReference type="ChEBI" id="CHEBI:60032"/>
        <dbReference type="ChEBI" id="CHEBI:60033"/>
        <dbReference type="EC" id="2.4.1.227"/>
    </reaction>
</comment>
<comment type="pathway">
    <text evidence="1">Cell wall biogenesis; peptidoglycan biosynthesis.</text>
</comment>
<comment type="subcellular location">
    <subcellularLocation>
        <location evidence="1">Cell membrane</location>
        <topology evidence="1">Peripheral membrane protein</topology>
        <orientation evidence="1">Cytoplasmic side</orientation>
    </subcellularLocation>
</comment>
<comment type="similarity">
    <text evidence="1">Belongs to the glycosyltransferase 28 family. MurG subfamily.</text>
</comment>
<dbReference type="EC" id="2.4.1.227" evidence="1"/>
<dbReference type="EMBL" id="CP001033">
    <property type="protein sequence ID" value="ACB89896.1"/>
    <property type="molecule type" value="Genomic_DNA"/>
</dbReference>
<dbReference type="RefSeq" id="WP_000724840.1">
    <property type="nucleotide sequence ID" value="NC_010582.1"/>
</dbReference>
<dbReference type="SMR" id="B2IN77"/>
<dbReference type="CAZy" id="GT28">
    <property type="family name" value="Glycosyltransferase Family 28"/>
</dbReference>
<dbReference type="KEGG" id="spw:SPCG_0644"/>
<dbReference type="HOGENOM" id="CLU_037404_0_0_9"/>
<dbReference type="UniPathway" id="UPA00219"/>
<dbReference type="GO" id="GO:0005886">
    <property type="term" value="C:plasma membrane"/>
    <property type="evidence" value="ECO:0007669"/>
    <property type="project" value="UniProtKB-SubCell"/>
</dbReference>
<dbReference type="GO" id="GO:0050511">
    <property type="term" value="F:undecaprenyldiphospho-muramoylpentapeptide beta-N-acetylglucosaminyltransferase activity"/>
    <property type="evidence" value="ECO:0007669"/>
    <property type="project" value="UniProtKB-UniRule"/>
</dbReference>
<dbReference type="GO" id="GO:0005975">
    <property type="term" value="P:carbohydrate metabolic process"/>
    <property type="evidence" value="ECO:0007669"/>
    <property type="project" value="InterPro"/>
</dbReference>
<dbReference type="GO" id="GO:0051301">
    <property type="term" value="P:cell division"/>
    <property type="evidence" value="ECO:0007669"/>
    <property type="project" value="UniProtKB-KW"/>
</dbReference>
<dbReference type="GO" id="GO:0071555">
    <property type="term" value="P:cell wall organization"/>
    <property type="evidence" value="ECO:0007669"/>
    <property type="project" value="UniProtKB-KW"/>
</dbReference>
<dbReference type="GO" id="GO:0030259">
    <property type="term" value="P:lipid glycosylation"/>
    <property type="evidence" value="ECO:0007669"/>
    <property type="project" value="UniProtKB-UniRule"/>
</dbReference>
<dbReference type="GO" id="GO:0009252">
    <property type="term" value="P:peptidoglycan biosynthetic process"/>
    <property type="evidence" value="ECO:0007669"/>
    <property type="project" value="UniProtKB-UniRule"/>
</dbReference>
<dbReference type="GO" id="GO:0008360">
    <property type="term" value="P:regulation of cell shape"/>
    <property type="evidence" value="ECO:0007669"/>
    <property type="project" value="UniProtKB-KW"/>
</dbReference>
<dbReference type="CDD" id="cd03785">
    <property type="entry name" value="GT28_MurG"/>
    <property type="match status" value="1"/>
</dbReference>
<dbReference type="Gene3D" id="3.40.50.2000">
    <property type="entry name" value="Glycogen Phosphorylase B"/>
    <property type="match status" value="2"/>
</dbReference>
<dbReference type="HAMAP" id="MF_00033">
    <property type="entry name" value="MurG"/>
    <property type="match status" value="1"/>
</dbReference>
<dbReference type="InterPro" id="IPR006009">
    <property type="entry name" value="GlcNAc_MurG"/>
</dbReference>
<dbReference type="InterPro" id="IPR007235">
    <property type="entry name" value="Glyco_trans_28_C"/>
</dbReference>
<dbReference type="InterPro" id="IPR004276">
    <property type="entry name" value="GlycoTrans_28_N"/>
</dbReference>
<dbReference type="PANTHER" id="PTHR21015:SF27">
    <property type="entry name" value="UDP-N-ACETYLGLUCOSAMINE--N-ACETYLMURAMYL-(PENTAPEPTIDE) PYROPHOSPHORYL-UNDECAPRENOL N-ACETYLGLUCOSAMINE TRANSFERASE"/>
    <property type="match status" value="1"/>
</dbReference>
<dbReference type="PANTHER" id="PTHR21015">
    <property type="entry name" value="UDP-N-ACETYLGLUCOSAMINE--N-ACETYLMURAMYL-(PENTAPEPTIDE) PYROPHOSPHORYL-UNDECAPRENOL N-ACETYLGLUCOSAMINE TRANSFERASE 1"/>
    <property type="match status" value="1"/>
</dbReference>
<dbReference type="Pfam" id="PF04101">
    <property type="entry name" value="Glyco_tran_28_C"/>
    <property type="match status" value="1"/>
</dbReference>
<dbReference type="Pfam" id="PF03033">
    <property type="entry name" value="Glyco_transf_28"/>
    <property type="match status" value="1"/>
</dbReference>
<dbReference type="SUPFAM" id="SSF53756">
    <property type="entry name" value="UDP-Glycosyltransferase/glycogen phosphorylase"/>
    <property type="match status" value="1"/>
</dbReference>
<protein>
    <recommendedName>
        <fullName evidence="1">UDP-N-acetylglucosamine--N-acetylmuramyl-(pentapeptide) pyrophosphoryl-undecaprenol N-acetylglucosamine transferase</fullName>
        <ecNumber evidence="1">2.4.1.227</ecNumber>
    </recommendedName>
    <alternativeName>
        <fullName evidence="1">Undecaprenyl-PP-MurNAc-pentapeptide-UDPGlcNAc GlcNAc transferase</fullName>
    </alternativeName>
</protein>
<gene>
    <name evidence="1" type="primary">murG</name>
    <name type="ordered locus">SPCG_0644</name>
</gene>
<accession>B2IN77</accession>
<keyword id="KW-0131">Cell cycle</keyword>
<keyword id="KW-0132">Cell division</keyword>
<keyword id="KW-1003">Cell membrane</keyword>
<keyword id="KW-0133">Cell shape</keyword>
<keyword id="KW-0961">Cell wall biogenesis/degradation</keyword>
<keyword id="KW-0328">Glycosyltransferase</keyword>
<keyword id="KW-0472">Membrane</keyword>
<keyword id="KW-0573">Peptidoglycan synthesis</keyword>
<keyword id="KW-0808">Transferase</keyword>
<organism>
    <name type="scientific">Streptococcus pneumoniae (strain CGSP14)</name>
    <dbReference type="NCBI Taxonomy" id="516950"/>
    <lineage>
        <taxon>Bacteria</taxon>
        <taxon>Bacillati</taxon>
        <taxon>Bacillota</taxon>
        <taxon>Bacilli</taxon>
        <taxon>Lactobacillales</taxon>
        <taxon>Streptococcaceae</taxon>
        <taxon>Streptococcus</taxon>
    </lineage>
</organism>